<gene>
    <name evidence="1" type="primary">gpmA</name>
    <name type="ordered locus">SG0750</name>
</gene>
<keyword id="KW-0312">Gluconeogenesis</keyword>
<keyword id="KW-0324">Glycolysis</keyword>
<keyword id="KW-0413">Isomerase</keyword>
<evidence type="ECO:0000255" key="1">
    <source>
        <dbReference type="HAMAP-Rule" id="MF_01039"/>
    </source>
</evidence>
<feature type="chain" id="PRO_1000135973" description="2,3-bisphosphoglycerate-dependent phosphoglycerate mutase">
    <location>
        <begin position="1"/>
        <end position="250"/>
    </location>
</feature>
<feature type="active site" description="Tele-phosphohistidine intermediate" evidence="1">
    <location>
        <position position="11"/>
    </location>
</feature>
<feature type="active site" description="Proton donor/acceptor" evidence="1">
    <location>
        <position position="89"/>
    </location>
</feature>
<feature type="binding site" evidence="1">
    <location>
        <begin position="10"/>
        <end position="17"/>
    </location>
    <ligand>
        <name>substrate</name>
    </ligand>
</feature>
<feature type="binding site" evidence="1">
    <location>
        <begin position="23"/>
        <end position="24"/>
    </location>
    <ligand>
        <name>substrate</name>
    </ligand>
</feature>
<feature type="binding site" evidence="1">
    <location>
        <position position="62"/>
    </location>
    <ligand>
        <name>substrate</name>
    </ligand>
</feature>
<feature type="binding site" evidence="1">
    <location>
        <begin position="89"/>
        <end position="92"/>
    </location>
    <ligand>
        <name>substrate</name>
    </ligand>
</feature>
<feature type="binding site" evidence="1">
    <location>
        <position position="100"/>
    </location>
    <ligand>
        <name>substrate</name>
    </ligand>
</feature>
<feature type="binding site" evidence="1">
    <location>
        <begin position="116"/>
        <end position="117"/>
    </location>
    <ligand>
        <name>substrate</name>
    </ligand>
</feature>
<feature type="binding site" evidence="1">
    <location>
        <begin position="185"/>
        <end position="186"/>
    </location>
    <ligand>
        <name>substrate</name>
    </ligand>
</feature>
<feature type="site" description="Transition state stabilizer" evidence="1">
    <location>
        <position position="184"/>
    </location>
</feature>
<accession>B5R739</accession>
<organism>
    <name type="scientific">Salmonella gallinarum (strain 287/91 / NCTC 13346)</name>
    <dbReference type="NCBI Taxonomy" id="550538"/>
    <lineage>
        <taxon>Bacteria</taxon>
        <taxon>Pseudomonadati</taxon>
        <taxon>Pseudomonadota</taxon>
        <taxon>Gammaproteobacteria</taxon>
        <taxon>Enterobacterales</taxon>
        <taxon>Enterobacteriaceae</taxon>
        <taxon>Salmonella</taxon>
    </lineage>
</organism>
<reference key="1">
    <citation type="journal article" date="2008" name="Genome Res.">
        <title>Comparative genome analysis of Salmonella enteritidis PT4 and Salmonella gallinarum 287/91 provides insights into evolutionary and host adaptation pathways.</title>
        <authorList>
            <person name="Thomson N.R."/>
            <person name="Clayton D.J."/>
            <person name="Windhorst D."/>
            <person name="Vernikos G."/>
            <person name="Davidson S."/>
            <person name="Churcher C."/>
            <person name="Quail M.A."/>
            <person name="Stevens M."/>
            <person name="Jones M.A."/>
            <person name="Watson M."/>
            <person name="Barron A."/>
            <person name="Layton A."/>
            <person name="Pickard D."/>
            <person name="Kingsley R.A."/>
            <person name="Bignell A."/>
            <person name="Clark L."/>
            <person name="Harris B."/>
            <person name="Ormond D."/>
            <person name="Abdellah Z."/>
            <person name="Brooks K."/>
            <person name="Cherevach I."/>
            <person name="Chillingworth T."/>
            <person name="Woodward J."/>
            <person name="Norberczak H."/>
            <person name="Lord A."/>
            <person name="Arrowsmith C."/>
            <person name="Jagels K."/>
            <person name="Moule S."/>
            <person name="Mungall K."/>
            <person name="Saunders M."/>
            <person name="Whitehead S."/>
            <person name="Chabalgoity J.A."/>
            <person name="Maskell D."/>
            <person name="Humphreys T."/>
            <person name="Roberts M."/>
            <person name="Barrow P.A."/>
            <person name="Dougan G."/>
            <person name="Parkhill J."/>
        </authorList>
    </citation>
    <scope>NUCLEOTIDE SEQUENCE [LARGE SCALE GENOMIC DNA]</scope>
    <source>
        <strain>287/91 / NCTC 13346</strain>
    </source>
</reference>
<sequence>MAVTKLVLVRHGESQWNKENRFTGWYDVDLSEKGVSEAKAAGKLLKEEGFSFDFAYTSVLKRAIHTLWNVLDELDQAWLPVEKSWKLNERHYGALQGLNKAETAEKYGDEQVKQWRRGFAVTPPELTKDDERYPGHDPRYAKLSEKELPLTESLALTIDRVIPYWNDTILPRMKSGERVIIAAHGNSLRALVKYLDNMSEDEILELNIPTGVPLVYEFDENFKPLKHYYLGNADEIAAKAAAVANQGKAK</sequence>
<protein>
    <recommendedName>
        <fullName evidence="1">2,3-bisphosphoglycerate-dependent phosphoglycerate mutase</fullName>
        <shortName evidence="1">BPG-dependent PGAM</shortName>
        <shortName evidence="1">PGAM</shortName>
        <shortName evidence="1">Phosphoglyceromutase</shortName>
        <shortName evidence="1">dPGM</shortName>
        <ecNumber evidence="1">5.4.2.11</ecNumber>
    </recommendedName>
</protein>
<proteinExistence type="inferred from homology"/>
<dbReference type="EC" id="5.4.2.11" evidence="1"/>
<dbReference type="EMBL" id="AM933173">
    <property type="protein sequence ID" value="CAR36646.1"/>
    <property type="molecule type" value="Genomic_DNA"/>
</dbReference>
<dbReference type="RefSeq" id="WP_000301556.1">
    <property type="nucleotide sequence ID" value="NC_011274.1"/>
</dbReference>
<dbReference type="SMR" id="B5R739"/>
<dbReference type="KEGG" id="seg:SG0750"/>
<dbReference type="HOGENOM" id="CLU_033323_1_1_6"/>
<dbReference type="UniPathway" id="UPA00109">
    <property type="reaction ID" value="UER00186"/>
</dbReference>
<dbReference type="Proteomes" id="UP000008321">
    <property type="component" value="Chromosome"/>
</dbReference>
<dbReference type="GO" id="GO:0004619">
    <property type="term" value="F:phosphoglycerate mutase activity"/>
    <property type="evidence" value="ECO:0007669"/>
    <property type="project" value="UniProtKB-EC"/>
</dbReference>
<dbReference type="GO" id="GO:0006094">
    <property type="term" value="P:gluconeogenesis"/>
    <property type="evidence" value="ECO:0007669"/>
    <property type="project" value="UniProtKB-UniRule"/>
</dbReference>
<dbReference type="GO" id="GO:0006096">
    <property type="term" value="P:glycolytic process"/>
    <property type="evidence" value="ECO:0007669"/>
    <property type="project" value="UniProtKB-UniRule"/>
</dbReference>
<dbReference type="CDD" id="cd07067">
    <property type="entry name" value="HP_PGM_like"/>
    <property type="match status" value="1"/>
</dbReference>
<dbReference type="FunFam" id="3.40.50.1240:FF:000003">
    <property type="entry name" value="2,3-bisphosphoglycerate-dependent phosphoglycerate mutase"/>
    <property type="match status" value="1"/>
</dbReference>
<dbReference type="Gene3D" id="3.40.50.1240">
    <property type="entry name" value="Phosphoglycerate mutase-like"/>
    <property type="match status" value="1"/>
</dbReference>
<dbReference type="HAMAP" id="MF_01039">
    <property type="entry name" value="PGAM_GpmA"/>
    <property type="match status" value="1"/>
</dbReference>
<dbReference type="InterPro" id="IPR013078">
    <property type="entry name" value="His_Pase_superF_clade-1"/>
</dbReference>
<dbReference type="InterPro" id="IPR029033">
    <property type="entry name" value="His_PPase_superfam"/>
</dbReference>
<dbReference type="InterPro" id="IPR001345">
    <property type="entry name" value="PG/BPGM_mutase_AS"/>
</dbReference>
<dbReference type="InterPro" id="IPR005952">
    <property type="entry name" value="Phosphogly_mut1"/>
</dbReference>
<dbReference type="NCBIfam" id="TIGR01258">
    <property type="entry name" value="pgm_1"/>
    <property type="match status" value="1"/>
</dbReference>
<dbReference type="NCBIfam" id="NF010713">
    <property type="entry name" value="PRK14115.1"/>
    <property type="match status" value="1"/>
</dbReference>
<dbReference type="PANTHER" id="PTHR11931">
    <property type="entry name" value="PHOSPHOGLYCERATE MUTASE"/>
    <property type="match status" value="1"/>
</dbReference>
<dbReference type="Pfam" id="PF00300">
    <property type="entry name" value="His_Phos_1"/>
    <property type="match status" value="1"/>
</dbReference>
<dbReference type="PIRSF" id="PIRSF000709">
    <property type="entry name" value="6PFK_2-Ptase"/>
    <property type="match status" value="1"/>
</dbReference>
<dbReference type="SMART" id="SM00855">
    <property type="entry name" value="PGAM"/>
    <property type="match status" value="1"/>
</dbReference>
<dbReference type="SUPFAM" id="SSF53254">
    <property type="entry name" value="Phosphoglycerate mutase-like"/>
    <property type="match status" value="1"/>
</dbReference>
<dbReference type="PROSITE" id="PS00175">
    <property type="entry name" value="PG_MUTASE"/>
    <property type="match status" value="1"/>
</dbReference>
<name>GPMA_SALG2</name>
<comment type="function">
    <text evidence="1">Catalyzes the interconversion of 2-phosphoglycerate and 3-phosphoglycerate.</text>
</comment>
<comment type="catalytic activity">
    <reaction evidence="1">
        <text>(2R)-2-phosphoglycerate = (2R)-3-phosphoglycerate</text>
        <dbReference type="Rhea" id="RHEA:15901"/>
        <dbReference type="ChEBI" id="CHEBI:58272"/>
        <dbReference type="ChEBI" id="CHEBI:58289"/>
        <dbReference type="EC" id="5.4.2.11"/>
    </reaction>
</comment>
<comment type="pathway">
    <text evidence="1">Carbohydrate degradation; glycolysis; pyruvate from D-glyceraldehyde 3-phosphate: step 3/5.</text>
</comment>
<comment type="subunit">
    <text evidence="1">Homodimer.</text>
</comment>
<comment type="similarity">
    <text evidence="1">Belongs to the phosphoglycerate mutase family. BPG-dependent PGAM subfamily.</text>
</comment>